<keyword id="KW-0238">DNA-binding</keyword>
<keyword id="KW-0539">Nucleus</keyword>
<keyword id="KW-1185">Reference proteome</keyword>
<keyword id="KW-0804">Transcription</keyword>
<keyword id="KW-0805">Transcription regulation</keyword>
<name>WRK13_ARATH</name>
<reference key="1">
    <citation type="submission" date="2001-09" db="EMBL/GenBank/DDBJ databases">
        <title>Arabidopsis thaliana transcription factor WRKY13.</title>
        <authorList>
            <person name="Ulker B."/>
            <person name="Kushnir S."/>
            <person name="Somssich I.E."/>
        </authorList>
    </citation>
    <scope>NUCLEOTIDE SEQUENCE [MRNA]</scope>
    <source>
        <strain>cv. Columbia</strain>
        <tissue>Flower</tissue>
    </source>
</reference>
<reference key="2">
    <citation type="journal article" date="1999" name="Nature">
        <title>Sequence and analysis of chromosome 4 of the plant Arabidopsis thaliana.</title>
        <authorList>
            <person name="Mayer K.F.X."/>
            <person name="Schueller C."/>
            <person name="Wambutt R."/>
            <person name="Murphy G."/>
            <person name="Volckaert G."/>
            <person name="Pohl T."/>
            <person name="Duesterhoeft A."/>
            <person name="Stiekema W."/>
            <person name="Entian K.-D."/>
            <person name="Terryn N."/>
            <person name="Harris B."/>
            <person name="Ansorge W."/>
            <person name="Brandt P."/>
            <person name="Grivell L.A."/>
            <person name="Rieger M."/>
            <person name="Weichselgartner M."/>
            <person name="de Simone V."/>
            <person name="Obermaier B."/>
            <person name="Mache R."/>
            <person name="Mueller M."/>
            <person name="Kreis M."/>
            <person name="Delseny M."/>
            <person name="Puigdomenech P."/>
            <person name="Watson M."/>
            <person name="Schmidtheini T."/>
            <person name="Reichert B."/>
            <person name="Portetelle D."/>
            <person name="Perez-Alonso M."/>
            <person name="Boutry M."/>
            <person name="Bancroft I."/>
            <person name="Vos P."/>
            <person name="Hoheisel J."/>
            <person name="Zimmermann W."/>
            <person name="Wedler H."/>
            <person name="Ridley P."/>
            <person name="Langham S.-A."/>
            <person name="McCullagh B."/>
            <person name="Bilham L."/>
            <person name="Robben J."/>
            <person name="van der Schueren J."/>
            <person name="Grymonprez B."/>
            <person name="Chuang Y.-J."/>
            <person name="Vandenbussche F."/>
            <person name="Braeken M."/>
            <person name="Weltjens I."/>
            <person name="Voet M."/>
            <person name="Bastiaens I."/>
            <person name="Aert R."/>
            <person name="Defoor E."/>
            <person name="Weitzenegger T."/>
            <person name="Bothe G."/>
            <person name="Ramsperger U."/>
            <person name="Hilbert H."/>
            <person name="Braun M."/>
            <person name="Holzer E."/>
            <person name="Brandt A."/>
            <person name="Peters S."/>
            <person name="van Staveren M."/>
            <person name="Dirkse W."/>
            <person name="Mooijman P."/>
            <person name="Klein Lankhorst R."/>
            <person name="Rose M."/>
            <person name="Hauf J."/>
            <person name="Koetter P."/>
            <person name="Berneiser S."/>
            <person name="Hempel S."/>
            <person name="Feldpausch M."/>
            <person name="Lamberth S."/>
            <person name="Van den Daele H."/>
            <person name="De Keyser A."/>
            <person name="Buysshaert C."/>
            <person name="Gielen J."/>
            <person name="Villarroel R."/>
            <person name="De Clercq R."/>
            <person name="van Montagu M."/>
            <person name="Rogers J."/>
            <person name="Cronin A."/>
            <person name="Quail M.A."/>
            <person name="Bray-Allen S."/>
            <person name="Clark L."/>
            <person name="Doggett J."/>
            <person name="Hall S."/>
            <person name="Kay M."/>
            <person name="Lennard N."/>
            <person name="McLay K."/>
            <person name="Mayes R."/>
            <person name="Pettett A."/>
            <person name="Rajandream M.A."/>
            <person name="Lyne M."/>
            <person name="Benes V."/>
            <person name="Rechmann S."/>
            <person name="Borkova D."/>
            <person name="Bloecker H."/>
            <person name="Scharfe M."/>
            <person name="Grimm M."/>
            <person name="Loehnert T.-H."/>
            <person name="Dose S."/>
            <person name="de Haan M."/>
            <person name="Maarse A.C."/>
            <person name="Schaefer M."/>
            <person name="Mueller-Auer S."/>
            <person name="Gabel C."/>
            <person name="Fuchs M."/>
            <person name="Fartmann B."/>
            <person name="Granderath K."/>
            <person name="Dauner D."/>
            <person name="Herzl A."/>
            <person name="Neumann S."/>
            <person name="Argiriou A."/>
            <person name="Vitale D."/>
            <person name="Liguori R."/>
            <person name="Piravandi E."/>
            <person name="Massenet O."/>
            <person name="Quigley F."/>
            <person name="Clabauld G."/>
            <person name="Muendlein A."/>
            <person name="Felber R."/>
            <person name="Schnabl S."/>
            <person name="Hiller R."/>
            <person name="Schmidt W."/>
            <person name="Lecharny A."/>
            <person name="Aubourg S."/>
            <person name="Chefdor F."/>
            <person name="Cooke R."/>
            <person name="Berger C."/>
            <person name="Monfort A."/>
            <person name="Casacuberta E."/>
            <person name="Gibbons T."/>
            <person name="Weber N."/>
            <person name="Vandenbol M."/>
            <person name="Bargues M."/>
            <person name="Terol J."/>
            <person name="Torres A."/>
            <person name="Perez-Perez A."/>
            <person name="Purnelle B."/>
            <person name="Bent E."/>
            <person name="Johnson S."/>
            <person name="Tacon D."/>
            <person name="Jesse T."/>
            <person name="Heijnen L."/>
            <person name="Schwarz S."/>
            <person name="Scholler P."/>
            <person name="Heber S."/>
            <person name="Francs P."/>
            <person name="Bielke C."/>
            <person name="Frishman D."/>
            <person name="Haase D."/>
            <person name="Lemcke K."/>
            <person name="Mewes H.-W."/>
            <person name="Stocker S."/>
            <person name="Zaccaria P."/>
            <person name="Bevan M."/>
            <person name="Wilson R.K."/>
            <person name="de la Bastide M."/>
            <person name="Habermann K."/>
            <person name="Parnell L."/>
            <person name="Dedhia N."/>
            <person name="Gnoj L."/>
            <person name="Schutz K."/>
            <person name="Huang E."/>
            <person name="Spiegel L."/>
            <person name="Sekhon M."/>
            <person name="Murray J."/>
            <person name="Sheet P."/>
            <person name="Cordes M."/>
            <person name="Abu-Threideh J."/>
            <person name="Stoneking T."/>
            <person name="Kalicki J."/>
            <person name="Graves T."/>
            <person name="Harmon G."/>
            <person name="Edwards J."/>
            <person name="Latreille P."/>
            <person name="Courtney L."/>
            <person name="Cloud J."/>
            <person name="Abbott A."/>
            <person name="Scott K."/>
            <person name="Johnson D."/>
            <person name="Minx P."/>
            <person name="Bentley D."/>
            <person name="Fulton B."/>
            <person name="Miller N."/>
            <person name="Greco T."/>
            <person name="Kemp K."/>
            <person name="Kramer J."/>
            <person name="Fulton L."/>
            <person name="Mardis E."/>
            <person name="Dante M."/>
            <person name="Pepin K."/>
            <person name="Hillier L.W."/>
            <person name="Nelson J."/>
            <person name="Spieth J."/>
            <person name="Ryan E."/>
            <person name="Andrews S."/>
            <person name="Geisel C."/>
            <person name="Layman D."/>
            <person name="Du H."/>
            <person name="Ali J."/>
            <person name="Berghoff A."/>
            <person name="Jones K."/>
            <person name="Drone K."/>
            <person name="Cotton M."/>
            <person name="Joshu C."/>
            <person name="Antonoiu B."/>
            <person name="Zidanic M."/>
            <person name="Strong C."/>
            <person name="Sun H."/>
            <person name="Lamar B."/>
            <person name="Yordan C."/>
            <person name="Ma P."/>
            <person name="Zhong J."/>
            <person name="Preston R."/>
            <person name="Vil D."/>
            <person name="Shekher M."/>
            <person name="Matero A."/>
            <person name="Shah R."/>
            <person name="Swaby I.K."/>
            <person name="O'Shaughnessy A."/>
            <person name="Rodriguez M."/>
            <person name="Hoffman J."/>
            <person name="Till S."/>
            <person name="Granat S."/>
            <person name="Shohdy N."/>
            <person name="Hasegawa A."/>
            <person name="Hameed A."/>
            <person name="Lodhi M."/>
            <person name="Johnson A."/>
            <person name="Chen E."/>
            <person name="Marra M.A."/>
            <person name="Martienssen R."/>
            <person name="McCombie W.R."/>
        </authorList>
    </citation>
    <scope>NUCLEOTIDE SEQUENCE [LARGE SCALE GENOMIC DNA]</scope>
    <source>
        <strain>cv. Columbia</strain>
    </source>
</reference>
<reference key="3">
    <citation type="journal article" date="2017" name="Plant J.">
        <title>Araport11: a complete reannotation of the Arabidopsis thaliana reference genome.</title>
        <authorList>
            <person name="Cheng C.Y."/>
            <person name="Krishnakumar V."/>
            <person name="Chan A.P."/>
            <person name="Thibaud-Nissen F."/>
            <person name="Schobel S."/>
            <person name="Town C.D."/>
        </authorList>
    </citation>
    <scope>GENOME REANNOTATION</scope>
    <source>
        <strain>cv. Columbia</strain>
    </source>
</reference>
<organism>
    <name type="scientific">Arabidopsis thaliana</name>
    <name type="common">Mouse-ear cress</name>
    <dbReference type="NCBI Taxonomy" id="3702"/>
    <lineage>
        <taxon>Eukaryota</taxon>
        <taxon>Viridiplantae</taxon>
        <taxon>Streptophyta</taxon>
        <taxon>Embryophyta</taxon>
        <taxon>Tracheophyta</taxon>
        <taxon>Spermatophyta</taxon>
        <taxon>Magnoliopsida</taxon>
        <taxon>eudicotyledons</taxon>
        <taxon>Gunneridae</taxon>
        <taxon>Pentapetalae</taxon>
        <taxon>rosids</taxon>
        <taxon>malvids</taxon>
        <taxon>Brassicales</taxon>
        <taxon>Brassicaceae</taxon>
        <taxon>Camelineae</taxon>
        <taxon>Arabidopsis</taxon>
    </lineage>
</organism>
<proteinExistence type="evidence at protein level"/>
<sequence length="304" mass="34204">MGAINQGISLFDESQTVINPINTNHLGFFFSFPSHSTLSSSSSSSSSSPSSLVSPFLGHNSLNSFLHNNPSSFISHPQDSINLMTNLPETLISSLSSSKQRDDHDGFLNLDHHRLTGSISSQRPLSNPWAWSCQAGYGSSQKNNHGSEIDVDDNDDEVGDGGGINDDDNGRHHHHDTPSRHDKHNTASLGVVSSLKMKKLKTRRKVREPRFCFKTLSEVDVLDDGYRWRKYGQKVVKNTQHPRSYYRCTQDKCRVKKRVERLADDPRMVITTYEGRHLHSPSNHLDDDSLSTSHLHPPLSNFFW</sequence>
<evidence type="ECO:0000250" key="1"/>
<evidence type="ECO:0000255" key="2">
    <source>
        <dbReference type="PROSITE-ProRule" id="PRU00223"/>
    </source>
</evidence>
<evidence type="ECO:0000256" key="3">
    <source>
        <dbReference type="SAM" id="MobiDB-lite"/>
    </source>
</evidence>
<evidence type="ECO:0000305" key="4"/>
<comment type="function">
    <text evidence="1">Transcription factor. Interacts specifically with the W box (5'-(T)TGAC[CT]-3'), a frequently occurring elicitor-responsive cis-acting element (By similarity).</text>
</comment>
<comment type="interaction">
    <interactant intactId="EBI-25516615">
        <id>Q9SVB7</id>
    </interactant>
    <interactant intactId="EBI-25516605">
        <id>A0A178WKP3</id>
        <label>AXX17_At1g14230</label>
    </interactant>
    <organismsDiffer>false</organismsDiffer>
    <experiments>3</experiments>
</comment>
<comment type="subcellular location">
    <subcellularLocation>
        <location evidence="4">Nucleus</location>
    </subcellularLocation>
</comment>
<comment type="similarity">
    <text evidence="4">Belongs to the WRKY group II-c family.</text>
</comment>
<feature type="chain" id="PRO_0000133655" description="Probable WRKY transcription factor 13">
    <location>
        <begin position="1"/>
        <end position="304"/>
    </location>
</feature>
<feature type="DNA-binding region" description="WRKY" evidence="2">
    <location>
        <begin position="217"/>
        <end position="282"/>
    </location>
</feature>
<feature type="region of interest" description="Disordered" evidence="3">
    <location>
        <begin position="141"/>
        <end position="190"/>
    </location>
</feature>
<feature type="compositionally biased region" description="Acidic residues" evidence="3">
    <location>
        <begin position="149"/>
        <end position="159"/>
    </location>
</feature>
<protein>
    <recommendedName>
        <fullName>Probable WRKY transcription factor 13</fullName>
    </recommendedName>
    <alternativeName>
        <fullName>WRKY DNA-binding protein 13</fullName>
    </alternativeName>
</protein>
<accession>Q9SVB7</accession>
<gene>
    <name type="primary">WRKY13</name>
    <name type="ordered locus">At4g39410</name>
    <name type="ORF">F23K16.40</name>
</gene>
<dbReference type="EMBL" id="AF421153">
    <property type="protein sequence ID" value="AAL13042.1"/>
    <property type="molecule type" value="mRNA"/>
</dbReference>
<dbReference type="EMBL" id="AL078620">
    <property type="protein sequence ID" value="CAB44676.1"/>
    <property type="molecule type" value="Genomic_DNA"/>
</dbReference>
<dbReference type="EMBL" id="AL161595">
    <property type="protein sequence ID" value="CAB80604.1"/>
    <property type="molecule type" value="Genomic_DNA"/>
</dbReference>
<dbReference type="EMBL" id="CP002687">
    <property type="protein sequence ID" value="AEE87071.1"/>
    <property type="molecule type" value="Genomic_DNA"/>
</dbReference>
<dbReference type="PIR" id="T09357">
    <property type="entry name" value="T09357"/>
</dbReference>
<dbReference type="RefSeq" id="NP_195651.1">
    <property type="nucleotide sequence ID" value="NM_120101.3"/>
</dbReference>
<dbReference type="SMR" id="Q9SVB7"/>
<dbReference type="BioGRID" id="15376">
    <property type="interactions" value="1"/>
</dbReference>
<dbReference type="FunCoup" id="Q9SVB7">
    <property type="interactions" value="1"/>
</dbReference>
<dbReference type="IntAct" id="Q9SVB7">
    <property type="interactions" value="1"/>
</dbReference>
<dbReference type="STRING" id="3702.Q9SVB7"/>
<dbReference type="PaxDb" id="3702-AT4G39410.1"/>
<dbReference type="ProteomicsDB" id="234314"/>
<dbReference type="EnsemblPlants" id="AT4G39410.1">
    <property type="protein sequence ID" value="AT4G39410.1"/>
    <property type="gene ID" value="AT4G39410"/>
</dbReference>
<dbReference type="GeneID" id="830096"/>
<dbReference type="Gramene" id="AT4G39410.1">
    <property type="protein sequence ID" value="AT4G39410.1"/>
    <property type="gene ID" value="AT4G39410"/>
</dbReference>
<dbReference type="KEGG" id="ath:AT4G39410"/>
<dbReference type="Araport" id="AT4G39410"/>
<dbReference type="TAIR" id="AT4G39410">
    <property type="gene designation" value="WRKY13"/>
</dbReference>
<dbReference type="eggNOG" id="ENOG502QUMX">
    <property type="taxonomic scope" value="Eukaryota"/>
</dbReference>
<dbReference type="HOGENOM" id="CLU_919336_0_0_1"/>
<dbReference type="InParanoid" id="Q9SVB7"/>
<dbReference type="OMA" id="HDKHNTA"/>
<dbReference type="OrthoDB" id="1842836at2759"/>
<dbReference type="PhylomeDB" id="Q9SVB7"/>
<dbReference type="PRO" id="PR:Q9SVB7"/>
<dbReference type="Proteomes" id="UP000006548">
    <property type="component" value="Chromosome 4"/>
</dbReference>
<dbReference type="ExpressionAtlas" id="Q9SVB7">
    <property type="expression patterns" value="baseline and differential"/>
</dbReference>
<dbReference type="GO" id="GO:0005634">
    <property type="term" value="C:nucleus"/>
    <property type="evidence" value="ECO:0007669"/>
    <property type="project" value="UniProtKB-SubCell"/>
</dbReference>
<dbReference type="GO" id="GO:0003700">
    <property type="term" value="F:DNA-binding transcription factor activity"/>
    <property type="evidence" value="ECO:0000314"/>
    <property type="project" value="TAIR"/>
</dbReference>
<dbReference type="GO" id="GO:0000978">
    <property type="term" value="F:RNA polymerase II cis-regulatory region sequence-specific DNA binding"/>
    <property type="evidence" value="ECO:0000314"/>
    <property type="project" value="TAIR"/>
</dbReference>
<dbReference type="GO" id="GO:0045893">
    <property type="term" value="P:positive regulation of DNA-templated transcription"/>
    <property type="evidence" value="ECO:0000315"/>
    <property type="project" value="TAIR"/>
</dbReference>
<dbReference type="GO" id="GO:1904369">
    <property type="term" value="P:positive regulation of sclerenchyma cell differentiation"/>
    <property type="evidence" value="ECO:0000315"/>
    <property type="project" value="TAIR"/>
</dbReference>
<dbReference type="GO" id="GO:1901141">
    <property type="term" value="P:regulation of lignin biosynthetic process"/>
    <property type="evidence" value="ECO:0000315"/>
    <property type="project" value="TAIR"/>
</dbReference>
<dbReference type="GO" id="GO:1990170">
    <property type="term" value="P:stress response to cadmium ion"/>
    <property type="evidence" value="ECO:0000315"/>
    <property type="project" value="TAIR"/>
</dbReference>
<dbReference type="FunFam" id="2.20.25.80:FF:000003">
    <property type="entry name" value="WRKY transcription factor 57"/>
    <property type="match status" value="1"/>
</dbReference>
<dbReference type="Gene3D" id="2.20.25.80">
    <property type="entry name" value="WRKY domain"/>
    <property type="match status" value="1"/>
</dbReference>
<dbReference type="InterPro" id="IPR003657">
    <property type="entry name" value="WRKY_dom"/>
</dbReference>
<dbReference type="InterPro" id="IPR036576">
    <property type="entry name" value="WRKY_dom_sf"/>
</dbReference>
<dbReference type="InterPro" id="IPR044810">
    <property type="entry name" value="WRKY_plant"/>
</dbReference>
<dbReference type="PANTHER" id="PTHR31221:SF17">
    <property type="entry name" value="WRKY TRANSCRIPTION FACTOR 13-RELATED"/>
    <property type="match status" value="1"/>
</dbReference>
<dbReference type="PANTHER" id="PTHR31221">
    <property type="entry name" value="WRKY TRANSCRIPTION FACTOR PROTEIN 1-RELATED"/>
    <property type="match status" value="1"/>
</dbReference>
<dbReference type="Pfam" id="PF03106">
    <property type="entry name" value="WRKY"/>
    <property type="match status" value="1"/>
</dbReference>
<dbReference type="SMART" id="SM00774">
    <property type="entry name" value="WRKY"/>
    <property type="match status" value="1"/>
</dbReference>
<dbReference type="SUPFAM" id="SSF118290">
    <property type="entry name" value="WRKY DNA-binding domain"/>
    <property type="match status" value="1"/>
</dbReference>
<dbReference type="PROSITE" id="PS50811">
    <property type="entry name" value="WRKY"/>
    <property type="match status" value="1"/>
</dbReference>